<organism>
    <name type="scientific">Maricaulis maris (strain MCS10)</name>
    <name type="common">Caulobacter maris</name>
    <dbReference type="NCBI Taxonomy" id="394221"/>
    <lineage>
        <taxon>Bacteria</taxon>
        <taxon>Pseudomonadati</taxon>
        <taxon>Pseudomonadota</taxon>
        <taxon>Alphaproteobacteria</taxon>
        <taxon>Maricaulales</taxon>
        <taxon>Maricaulaceae</taxon>
        <taxon>Maricaulis</taxon>
    </lineage>
</organism>
<evidence type="ECO:0000255" key="1">
    <source>
        <dbReference type="HAMAP-Rule" id="MF_01576"/>
    </source>
</evidence>
<protein>
    <recommendedName>
        <fullName evidence="1">Bifunctional protein FolD</fullName>
    </recommendedName>
    <domain>
        <recommendedName>
            <fullName evidence="1">Methylenetetrahydrofolate dehydrogenase</fullName>
            <ecNumber evidence="1">1.5.1.5</ecNumber>
        </recommendedName>
    </domain>
    <domain>
        <recommendedName>
            <fullName evidence="1">Methenyltetrahydrofolate cyclohydrolase</fullName>
            <ecNumber evidence="1">3.5.4.9</ecNumber>
        </recommendedName>
    </domain>
</protein>
<dbReference type="EC" id="1.5.1.5" evidence="1"/>
<dbReference type="EC" id="3.5.4.9" evidence="1"/>
<dbReference type="EMBL" id="CP000449">
    <property type="protein sequence ID" value="ABI64347.1"/>
    <property type="molecule type" value="Genomic_DNA"/>
</dbReference>
<dbReference type="RefSeq" id="WP_011641994.1">
    <property type="nucleotide sequence ID" value="NC_008347.1"/>
</dbReference>
<dbReference type="SMR" id="Q0ATP0"/>
<dbReference type="STRING" id="394221.Mmar10_0051"/>
<dbReference type="KEGG" id="mmr:Mmar10_0051"/>
<dbReference type="eggNOG" id="COG0190">
    <property type="taxonomic scope" value="Bacteria"/>
</dbReference>
<dbReference type="HOGENOM" id="CLU_034045_1_2_5"/>
<dbReference type="OrthoDB" id="9803580at2"/>
<dbReference type="UniPathway" id="UPA00193"/>
<dbReference type="Proteomes" id="UP000001964">
    <property type="component" value="Chromosome"/>
</dbReference>
<dbReference type="GO" id="GO:0005829">
    <property type="term" value="C:cytosol"/>
    <property type="evidence" value="ECO:0007669"/>
    <property type="project" value="TreeGrafter"/>
</dbReference>
<dbReference type="GO" id="GO:0004477">
    <property type="term" value="F:methenyltetrahydrofolate cyclohydrolase activity"/>
    <property type="evidence" value="ECO:0007669"/>
    <property type="project" value="UniProtKB-UniRule"/>
</dbReference>
<dbReference type="GO" id="GO:0004488">
    <property type="term" value="F:methylenetetrahydrofolate dehydrogenase (NADP+) activity"/>
    <property type="evidence" value="ECO:0007669"/>
    <property type="project" value="UniProtKB-UniRule"/>
</dbReference>
<dbReference type="GO" id="GO:0000105">
    <property type="term" value="P:L-histidine biosynthetic process"/>
    <property type="evidence" value="ECO:0007669"/>
    <property type="project" value="UniProtKB-KW"/>
</dbReference>
<dbReference type="GO" id="GO:0009086">
    <property type="term" value="P:methionine biosynthetic process"/>
    <property type="evidence" value="ECO:0007669"/>
    <property type="project" value="UniProtKB-KW"/>
</dbReference>
<dbReference type="GO" id="GO:0006164">
    <property type="term" value="P:purine nucleotide biosynthetic process"/>
    <property type="evidence" value="ECO:0007669"/>
    <property type="project" value="UniProtKB-KW"/>
</dbReference>
<dbReference type="GO" id="GO:0035999">
    <property type="term" value="P:tetrahydrofolate interconversion"/>
    <property type="evidence" value="ECO:0007669"/>
    <property type="project" value="UniProtKB-UniRule"/>
</dbReference>
<dbReference type="CDD" id="cd01080">
    <property type="entry name" value="NAD_bind_m-THF_DH_Cyclohyd"/>
    <property type="match status" value="1"/>
</dbReference>
<dbReference type="FunFam" id="3.40.50.720:FF:000006">
    <property type="entry name" value="Bifunctional protein FolD"/>
    <property type="match status" value="1"/>
</dbReference>
<dbReference type="FunFam" id="3.40.50.10860:FF:000005">
    <property type="entry name" value="C-1-tetrahydrofolate synthase, cytoplasmic, putative"/>
    <property type="match status" value="1"/>
</dbReference>
<dbReference type="Gene3D" id="3.40.50.10860">
    <property type="entry name" value="Leucine Dehydrogenase, chain A, domain 1"/>
    <property type="match status" value="1"/>
</dbReference>
<dbReference type="Gene3D" id="3.40.50.720">
    <property type="entry name" value="NAD(P)-binding Rossmann-like Domain"/>
    <property type="match status" value="1"/>
</dbReference>
<dbReference type="HAMAP" id="MF_01576">
    <property type="entry name" value="THF_DHG_CYH"/>
    <property type="match status" value="1"/>
</dbReference>
<dbReference type="InterPro" id="IPR046346">
    <property type="entry name" value="Aminoacid_DH-like_N_sf"/>
</dbReference>
<dbReference type="InterPro" id="IPR036291">
    <property type="entry name" value="NAD(P)-bd_dom_sf"/>
</dbReference>
<dbReference type="InterPro" id="IPR000672">
    <property type="entry name" value="THF_DH/CycHdrlase"/>
</dbReference>
<dbReference type="InterPro" id="IPR020630">
    <property type="entry name" value="THF_DH/CycHdrlase_cat_dom"/>
</dbReference>
<dbReference type="InterPro" id="IPR020867">
    <property type="entry name" value="THF_DH/CycHdrlase_CS"/>
</dbReference>
<dbReference type="InterPro" id="IPR020631">
    <property type="entry name" value="THF_DH/CycHdrlase_NAD-bd_dom"/>
</dbReference>
<dbReference type="NCBIfam" id="NF010783">
    <property type="entry name" value="PRK14186.1"/>
    <property type="match status" value="1"/>
</dbReference>
<dbReference type="NCBIfam" id="NF010785">
    <property type="entry name" value="PRK14188.1"/>
    <property type="match status" value="1"/>
</dbReference>
<dbReference type="PANTHER" id="PTHR48099:SF5">
    <property type="entry name" value="C-1-TETRAHYDROFOLATE SYNTHASE, CYTOPLASMIC"/>
    <property type="match status" value="1"/>
</dbReference>
<dbReference type="PANTHER" id="PTHR48099">
    <property type="entry name" value="C-1-TETRAHYDROFOLATE SYNTHASE, CYTOPLASMIC-RELATED"/>
    <property type="match status" value="1"/>
</dbReference>
<dbReference type="Pfam" id="PF00763">
    <property type="entry name" value="THF_DHG_CYH"/>
    <property type="match status" value="1"/>
</dbReference>
<dbReference type="Pfam" id="PF02882">
    <property type="entry name" value="THF_DHG_CYH_C"/>
    <property type="match status" value="1"/>
</dbReference>
<dbReference type="PRINTS" id="PR00085">
    <property type="entry name" value="THFDHDRGNASE"/>
</dbReference>
<dbReference type="SUPFAM" id="SSF53223">
    <property type="entry name" value="Aminoacid dehydrogenase-like, N-terminal domain"/>
    <property type="match status" value="1"/>
</dbReference>
<dbReference type="SUPFAM" id="SSF51735">
    <property type="entry name" value="NAD(P)-binding Rossmann-fold domains"/>
    <property type="match status" value="1"/>
</dbReference>
<dbReference type="PROSITE" id="PS00766">
    <property type="entry name" value="THF_DHG_CYH_1"/>
    <property type="match status" value="1"/>
</dbReference>
<dbReference type="PROSITE" id="PS00767">
    <property type="entry name" value="THF_DHG_CYH_2"/>
    <property type="match status" value="1"/>
</dbReference>
<comment type="function">
    <text evidence="1">Catalyzes the oxidation of 5,10-methylenetetrahydrofolate to 5,10-methenyltetrahydrofolate and then the hydrolysis of 5,10-methenyltetrahydrofolate to 10-formyltetrahydrofolate.</text>
</comment>
<comment type="catalytic activity">
    <reaction evidence="1">
        <text>(6R)-5,10-methylene-5,6,7,8-tetrahydrofolate + NADP(+) = (6R)-5,10-methenyltetrahydrofolate + NADPH</text>
        <dbReference type="Rhea" id="RHEA:22812"/>
        <dbReference type="ChEBI" id="CHEBI:15636"/>
        <dbReference type="ChEBI" id="CHEBI:57455"/>
        <dbReference type="ChEBI" id="CHEBI:57783"/>
        <dbReference type="ChEBI" id="CHEBI:58349"/>
        <dbReference type="EC" id="1.5.1.5"/>
    </reaction>
</comment>
<comment type="catalytic activity">
    <reaction evidence="1">
        <text>(6R)-5,10-methenyltetrahydrofolate + H2O = (6R)-10-formyltetrahydrofolate + H(+)</text>
        <dbReference type="Rhea" id="RHEA:23700"/>
        <dbReference type="ChEBI" id="CHEBI:15377"/>
        <dbReference type="ChEBI" id="CHEBI:15378"/>
        <dbReference type="ChEBI" id="CHEBI:57455"/>
        <dbReference type="ChEBI" id="CHEBI:195366"/>
        <dbReference type="EC" id="3.5.4.9"/>
    </reaction>
</comment>
<comment type="pathway">
    <text evidence="1">One-carbon metabolism; tetrahydrofolate interconversion.</text>
</comment>
<comment type="subunit">
    <text evidence="1">Homodimer.</text>
</comment>
<comment type="similarity">
    <text evidence="1">Belongs to the tetrahydrofolate dehydrogenase/cyclohydrolase family.</text>
</comment>
<name>FOLD_MARMM</name>
<accession>Q0ATP0</accession>
<gene>
    <name evidence="1" type="primary">folD</name>
    <name type="ordered locus">Mmar10_0051</name>
</gene>
<sequence length="298" mass="30916">MSAHLIDGKAIAAEIDARAGEVGAKLASSLGRPPCLAVVLVGEDPASDVYVRNKVRRTEAAGLTSIEIRKSAEATEAEIIAIVERLNADDGVDGILVQMPLPGHIDTNRVIGRIDPDKDVDGLTEVSAGRLVLGKPGLRPCTPAGCVLLAERALGDLSGKSVVVIGRSILVGKPAALLFLEKNATVTIAHSRTADLPSLCRTADILVPAVGRPEMVRGDWVKPGACVLDVGINRIDAPERGAGKTRLVGDAAFDEIVGHAGWITPVPGGIGPMTIAMLLKNTVIAAALRAKQPALADF</sequence>
<feature type="chain" id="PRO_0000268393" description="Bifunctional protein FolD">
    <location>
        <begin position="1"/>
        <end position="298"/>
    </location>
</feature>
<feature type="binding site" evidence="1">
    <location>
        <begin position="166"/>
        <end position="168"/>
    </location>
    <ligand>
        <name>NADP(+)</name>
        <dbReference type="ChEBI" id="CHEBI:58349"/>
    </ligand>
</feature>
<feature type="binding site" evidence="1">
    <location>
        <position position="191"/>
    </location>
    <ligand>
        <name>NADP(+)</name>
        <dbReference type="ChEBI" id="CHEBI:58349"/>
    </ligand>
</feature>
<feature type="binding site" evidence="1">
    <location>
        <position position="232"/>
    </location>
    <ligand>
        <name>NADP(+)</name>
        <dbReference type="ChEBI" id="CHEBI:58349"/>
    </ligand>
</feature>
<proteinExistence type="inferred from homology"/>
<keyword id="KW-0028">Amino-acid biosynthesis</keyword>
<keyword id="KW-0368">Histidine biosynthesis</keyword>
<keyword id="KW-0378">Hydrolase</keyword>
<keyword id="KW-0486">Methionine biosynthesis</keyword>
<keyword id="KW-0511">Multifunctional enzyme</keyword>
<keyword id="KW-0521">NADP</keyword>
<keyword id="KW-0554">One-carbon metabolism</keyword>
<keyword id="KW-0560">Oxidoreductase</keyword>
<keyword id="KW-0658">Purine biosynthesis</keyword>
<keyword id="KW-1185">Reference proteome</keyword>
<reference key="1">
    <citation type="submission" date="2006-08" db="EMBL/GenBank/DDBJ databases">
        <title>Complete sequence of Maricaulis maris MCS10.</title>
        <authorList>
            <consortium name="US DOE Joint Genome Institute"/>
            <person name="Copeland A."/>
            <person name="Lucas S."/>
            <person name="Lapidus A."/>
            <person name="Barry K."/>
            <person name="Detter J.C."/>
            <person name="Glavina del Rio T."/>
            <person name="Hammon N."/>
            <person name="Israni S."/>
            <person name="Dalin E."/>
            <person name="Tice H."/>
            <person name="Pitluck S."/>
            <person name="Saunders E."/>
            <person name="Brettin T."/>
            <person name="Bruce D."/>
            <person name="Han C."/>
            <person name="Tapia R."/>
            <person name="Gilna P."/>
            <person name="Schmutz J."/>
            <person name="Larimer F."/>
            <person name="Land M."/>
            <person name="Hauser L."/>
            <person name="Kyrpides N."/>
            <person name="Mikhailova N."/>
            <person name="Viollier P."/>
            <person name="Stephens C."/>
            <person name="Richardson P."/>
        </authorList>
    </citation>
    <scope>NUCLEOTIDE SEQUENCE [LARGE SCALE GENOMIC DNA]</scope>
    <source>
        <strain>MCS10</strain>
    </source>
</reference>